<organism>
    <name type="scientific">Frankia alni (strain DSM 45986 / CECT 9034 / ACN14a)</name>
    <dbReference type="NCBI Taxonomy" id="326424"/>
    <lineage>
        <taxon>Bacteria</taxon>
        <taxon>Bacillati</taxon>
        <taxon>Actinomycetota</taxon>
        <taxon>Actinomycetes</taxon>
        <taxon>Frankiales</taxon>
        <taxon>Frankiaceae</taxon>
        <taxon>Frankia</taxon>
    </lineage>
</organism>
<evidence type="ECO:0000255" key="1">
    <source>
        <dbReference type="HAMAP-Rule" id="MF_00145"/>
    </source>
</evidence>
<keyword id="KW-0067">ATP-binding</keyword>
<keyword id="KW-0963">Cytoplasm</keyword>
<keyword id="KW-0324">Glycolysis</keyword>
<keyword id="KW-0418">Kinase</keyword>
<keyword id="KW-0547">Nucleotide-binding</keyword>
<keyword id="KW-1185">Reference proteome</keyword>
<keyword id="KW-0808">Transferase</keyword>
<protein>
    <recommendedName>
        <fullName evidence="1">Phosphoglycerate kinase</fullName>
        <ecNumber evidence="1">2.7.2.3</ecNumber>
    </recommendedName>
</protein>
<feature type="chain" id="PRO_1000192830" description="Phosphoglycerate kinase">
    <location>
        <begin position="1"/>
        <end position="400"/>
    </location>
</feature>
<feature type="binding site" evidence="1">
    <location>
        <begin position="19"/>
        <end position="21"/>
    </location>
    <ligand>
        <name>substrate</name>
    </ligand>
</feature>
<feature type="binding site" evidence="1">
    <location>
        <position position="38"/>
    </location>
    <ligand>
        <name>substrate</name>
    </ligand>
</feature>
<feature type="binding site" evidence="1">
    <location>
        <begin position="61"/>
        <end position="64"/>
    </location>
    <ligand>
        <name>substrate</name>
    </ligand>
</feature>
<feature type="binding site" evidence="1">
    <location>
        <position position="124"/>
    </location>
    <ligand>
        <name>substrate</name>
    </ligand>
</feature>
<feature type="binding site" evidence="1">
    <location>
        <position position="161"/>
    </location>
    <ligand>
        <name>substrate</name>
    </ligand>
</feature>
<feature type="binding site" evidence="1">
    <location>
        <position position="211"/>
    </location>
    <ligand>
        <name>ATP</name>
        <dbReference type="ChEBI" id="CHEBI:30616"/>
    </ligand>
</feature>
<feature type="binding site" evidence="1">
    <location>
        <position position="299"/>
    </location>
    <ligand>
        <name>ATP</name>
        <dbReference type="ChEBI" id="CHEBI:30616"/>
    </ligand>
</feature>
<feature type="binding site" evidence="1">
    <location>
        <position position="330"/>
    </location>
    <ligand>
        <name>ATP</name>
        <dbReference type="ChEBI" id="CHEBI:30616"/>
    </ligand>
</feature>
<feature type="binding site" evidence="1">
    <location>
        <begin position="356"/>
        <end position="359"/>
    </location>
    <ligand>
        <name>ATP</name>
        <dbReference type="ChEBI" id="CHEBI:30616"/>
    </ligand>
</feature>
<name>PGK_FRAAA</name>
<comment type="catalytic activity">
    <reaction evidence="1">
        <text>(2R)-3-phosphoglycerate + ATP = (2R)-3-phospho-glyceroyl phosphate + ADP</text>
        <dbReference type="Rhea" id="RHEA:14801"/>
        <dbReference type="ChEBI" id="CHEBI:30616"/>
        <dbReference type="ChEBI" id="CHEBI:57604"/>
        <dbReference type="ChEBI" id="CHEBI:58272"/>
        <dbReference type="ChEBI" id="CHEBI:456216"/>
        <dbReference type="EC" id="2.7.2.3"/>
    </reaction>
</comment>
<comment type="pathway">
    <text evidence="1">Carbohydrate degradation; glycolysis; pyruvate from D-glyceraldehyde 3-phosphate: step 2/5.</text>
</comment>
<comment type="subunit">
    <text evidence="1">Monomer.</text>
</comment>
<comment type="subcellular location">
    <subcellularLocation>
        <location evidence="1">Cytoplasm</location>
    </subcellularLocation>
</comment>
<comment type="similarity">
    <text evidence="1">Belongs to the phosphoglycerate kinase family.</text>
</comment>
<gene>
    <name evidence="1" type="primary">pgk</name>
    <name type="ordered locus">FRAAL4587</name>
</gene>
<proteinExistence type="inferred from homology"/>
<dbReference type="EC" id="2.7.2.3" evidence="1"/>
<dbReference type="EMBL" id="CT573213">
    <property type="protein sequence ID" value="CAJ63229.1"/>
    <property type="molecule type" value="Genomic_DNA"/>
</dbReference>
<dbReference type="RefSeq" id="WP_011605703.1">
    <property type="nucleotide sequence ID" value="NC_008278.1"/>
</dbReference>
<dbReference type="SMR" id="Q0RH06"/>
<dbReference type="STRING" id="326424.FRAAL4587"/>
<dbReference type="KEGG" id="fal:FRAAL4587"/>
<dbReference type="eggNOG" id="COG0126">
    <property type="taxonomic scope" value="Bacteria"/>
</dbReference>
<dbReference type="HOGENOM" id="CLU_025427_0_2_11"/>
<dbReference type="OrthoDB" id="9808460at2"/>
<dbReference type="UniPathway" id="UPA00109">
    <property type="reaction ID" value="UER00185"/>
</dbReference>
<dbReference type="Proteomes" id="UP000000657">
    <property type="component" value="Chromosome"/>
</dbReference>
<dbReference type="GO" id="GO:0005829">
    <property type="term" value="C:cytosol"/>
    <property type="evidence" value="ECO:0007669"/>
    <property type="project" value="TreeGrafter"/>
</dbReference>
<dbReference type="GO" id="GO:0043531">
    <property type="term" value="F:ADP binding"/>
    <property type="evidence" value="ECO:0007669"/>
    <property type="project" value="TreeGrafter"/>
</dbReference>
<dbReference type="GO" id="GO:0005524">
    <property type="term" value="F:ATP binding"/>
    <property type="evidence" value="ECO:0007669"/>
    <property type="project" value="UniProtKB-KW"/>
</dbReference>
<dbReference type="GO" id="GO:0004618">
    <property type="term" value="F:phosphoglycerate kinase activity"/>
    <property type="evidence" value="ECO:0007669"/>
    <property type="project" value="UniProtKB-UniRule"/>
</dbReference>
<dbReference type="GO" id="GO:0006094">
    <property type="term" value="P:gluconeogenesis"/>
    <property type="evidence" value="ECO:0007669"/>
    <property type="project" value="TreeGrafter"/>
</dbReference>
<dbReference type="GO" id="GO:0006096">
    <property type="term" value="P:glycolytic process"/>
    <property type="evidence" value="ECO:0007669"/>
    <property type="project" value="UniProtKB-UniRule"/>
</dbReference>
<dbReference type="CDD" id="cd00318">
    <property type="entry name" value="Phosphoglycerate_kinase"/>
    <property type="match status" value="1"/>
</dbReference>
<dbReference type="FunFam" id="3.40.50.1260:FF:000006">
    <property type="entry name" value="Phosphoglycerate kinase"/>
    <property type="match status" value="1"/>
</dbReference>
<dbReference type="FunFam" id="3.40.50.1260:FF:000031">
    <property type="entry name" value="Phosphoglycerate kinase 1"/>
    <property type="match status" value="1"/>
</dbReference>
<dbReference type="Gene3D" id="3.40.50.1260">
    <property type="entry name" value="Phosphoglycerate kinase, N-terminal domain"/>
    <property type="match status" value="2"/>
</dbReference>
<dbReference type="HAMAP" id="MF_00145">
    <property type="entry name" value="Phosphoglyc_kinase"/>
    <property type="match status" value="1"/>
</dbReference>
<dbReference type="InterPro" id="IPR001576">
    <property type="entry name" value="Phosphoglycerate_kinase"/>
</dbReference>
<dbReference type="InterPro" id="IPR015911">
    <property type="entry name" value="Phosphoglycerate_kinase_CS"/>
</dbReference>
<dbReference type="InterPro" id="IPR015824">
    <property type="entry name" value="Phosphoglycerate_kinase_N"/>
</dbReference>
<dbReference type="InterPro" id="IPR036043">
    <property type="entry name" value="Phosphoglycerate_kinase_sf"/>
</dbReference>
<dbReference type="PANTHER" id="PTHR11406">
    <property type="entry name" value="PHOSPHOGLYCERATE KINASE"/>
    <property type="match status" value="1"/>
</dbReference>
<dbReference type="PANTHER" id="PTHR11406:SF23">
    <property type="entry name" value="PHOSPHOGLYCERATE KINASE 1, CHLOROPLASTIC-RELATED"/>
    <property type="match status" value="1"/>
</dbReference>
<dbReference type="Pfam" id="PF00162">
    <property type="entry name" value="PGK"/>
    <property type="match status" value="1"/>
</dbReference>
<dbReference type="PIRSF" id="PIRSF000724">
    <property type="entry name" value="Pgk"/>
    <property type="match status" value="1"/>
</dbReference>
<dbReference type="PRINTS" id="PR00477">
    <property type="entry name" value="PHGLYCKINASE"/>
</dbReference>
<dbReference type="SUPFAM" id="SSF53748">
    <property type="entry name" value="Phosphoglycerate kinase"/>
    <property type="match status" value="1"/>
</dbReference>
<dbReference type="PROSITE" id="PS00111">
    <property type="entry name" value="PGLYCERATE_KINASE"/>
    <property type="match status" value="1"/>
</dbReference>
<accession>Q0RH06</accession>
<sequence length="400" mass="40792">MRTIDDLQVAGHRVLVRSDLNVPLDRSGDTPRITDDGRVRASVPTIAALLDRGARVIVTSHLGRPKGEPDPRYSLEPVAARLGELLGRPVAFAGDGTGDIAGAHAREVVAGLGDGEVALLENLRFSPGETSKDAVTRASFADALAALAEFYVGDAFGAVHRAHASVADVPKRLPHAAGRLVLTELDVLRRLSADPARPYAVVLGGSKVSDKLGVIRALLPKVDALLVGGGMCFTFLAALGHGVGGSLLEAEMIDTCKALLAEGGDRIVLPTDVVVADRFAADAQTAVVPADGIGDGWLGLDIGPASTALFAGRLDGAATVFWNGPMGVFELAPFAAGTRGVAKAIAAGDGFSVVGGGDSAAAVRTLGIPEDAFSHISTGGGASLEYLEGKTLPGLAALDV</sequence>
<reference key="1">
    <citation type="journal article" date="2007" name="Genome Res.">
        <title>Genome characteristics of facultatively symbiotic Frankia sp. strains reflect host range and host plant biogeography.</title>
        <authorList>
            <person name="Normand P."/>
            <person name="Lapierre P."/>
            <person name="Tisa L.S."/>
            <person name="Gogarten J.P."/>
            <person name="Alloisio N."/>
            <person name="Bagnarol E."/>
            <person name="Bassi C.A."/>
            <person name="Berry A.M."/>
            <person name="Bickhart D.M."/>
            <person name="Choisne N."/>
            <person name="Couloux A."/>
            <person name="Cournoyer B."/>
            <person name="Cruveiller S."/>
            <person name="Daubin V."/>
            <person name="Demange N."/>
            <person name="Francino M.P."/>
            <person name="Goltsman E."/>
            <person name="Huang Y."/>
            <person name="Kopp O.R."/>
            <person name="Labarre L."/>
            <person name="Lapidus A."/>
            <person name="Lavire C."/>
            <person name="Marechal J."/>
            <person name="Martinez M."/>
            <person name="Mastronunzio J.E."/>
            <person name="Mullin B.C."/>
            <person name="Niemann J."/>
            <person name="Pujic P."/>
            <person name="Rawnsley T."/>
            <person name="Rouy Z."/>
            <person name="Schenowitz C."/>
            <person name="Sellstedt A."/>
            <person name="Tavares F."/>
            <person name="Tomkins J.P."/>
            <person name="Vallenet D."/>
            <person name="Valverde C."/>
            <person name="Wall L.G."/>
            <person name="Wang Y."/>
            <person name="Medigue C."/>
            <person name="Benson D.R."/>
        </authorList>
    </citation>
    <scope>NUCLEOTIDE SEQUENCE [LARGE SCALE GENOMIC DNA]</scope>
    <source>
        <strain>DSM 45986 / CECT 9034 / ACN14a</strain>
    </source>
</reference>